<accession>B9KK24</accession>
<dbReference type="EC" id="1.3.7.7" evidence="1"/>
<dbReference type="EMBL" id="CP001150">
    <property type="protein sequence ID" value="ACM01471.1"/>
    <property type="molecule type" value="Genomic_DNA"/>
</dbReference>
<dbReference type="RefSeq" id="WP_015920854.1">
    <property type="nucleotide sequence ID" value="NC_011963.1"/>
</dbReference>
<dbReference type="SMR" id="B9KK24"/>
<dbReference type="GeneID" id="67447018"/>
<dbReference type="KEGG" id="rsk:RSKD131_1611"/>
<dbReference type="HOGENOM" id="CLU_037170_0_0_5"/>
<dbReference type="UniPathway" id="UPA00671"/>
<dbReference type="GO" id="GO:0051539">
    <property type="term" value="F:4 iron, 4 sulfur cluster binding"/>
    <property type="evidence" value="ECO:0007669"/>
    <property type="project" value="UniProtKB-UniRule"/>
</dbReference>
<dbReference type="GO" id="GO:0005524">
    <property type="term" value="F:ATP binding"/>
    <property type="evidence" value="ECO:0007669"/>
    <property type="project" value="UniProtKB-UniRule"/>
</dbReference>
<dbReference type="GO" id="GO:0046872">
    <property type="term" value="F:metal ion binding"/>
    <property type="evidence" value="ECO:0007669"/>
    <property type="project" value="UniProtKB-KW"/>
</dbReference>
<dbReference type="GO" id="GO:0016730">
    <property type="term" value="F:oxidoreductase activity, acting on iron-sulfur proteins as donors"/>
    <property type="evidence" value="ECO:0007669"/>
    <property type="project" value="InterPro"/>
</dbReference>
<dbReference type="GO" id="GO:0016636">
    <property type="term" value="F:oxidoreductase activity, acting on the CH-CH group of donors, iron-sulfur protein as acceptor"/>
    <property type="evidence" value="ECO:0007669"/>
    <property type="project" value="UniProtKB-UniRule"/>
</dbReference>
<dbReference type="GO" id="GO:0036070">
    <property type="term" value="P:light-independent bacteriochlorophyll biosynthetic process"/>
    <property type="evidence" value="ECO:0007669"/>
    <property type="project" value="UniProtKB-UniRule"/>
</dbReference>
<dbReference type="GO" id="GO:0019685">
    <property type="term" value="P:photosynthesis, dark reaction"/>
    <property type="evidence" value="ECO:0007669"/>
    <property type="project" value="InterPro"/>
</dbReference>
<dbReference type="Gene3D" id="3.40.50.1980">
    <property type="entry name" value="Nitrogenase molybdenum iron protein domain"/>
    <property type="match status" value="3"/>
</dbReference>
<dbReference type="HAMAP" id="MF_00352">
    <property type="entry name" value="ChlN_BchN"/>
    <property type="match status" value="1"/>
</dbReference>
<dbReference type="InterPro" id="IPR050293">
    <property type="entry name" value="LIPOR_BchN/ChlN"/>
</dbReference>
<dbReference type="InterPro" id="IPR000510">
    <property type="entry name" value="Nase/OxRdtase_comp1"/>
</dbReference>
<dbReference type="InterPro" id="IPR005970">
    <property type="entry name" value="Protochl_reductN"/>
</dbReference>
<dbReference type="NCBIfam" id="TIGR01279">
    <property type="entry name" value="DPOR_bchN"/>
    <property type="match status" value="1"/>
</dbReference>
<dbReference type="NCBIfam" id="NF002768">
    <property type="entry name" value="PRK02842.1"/>
    <property type="match status" value="1"/>
</dbReference>
<dbReference type="PANTHER" id="PTHR39429">
    <property type="entry name" value="LIGHT-INDEPENDENT PROTOCHLOROPHYLLIDE REDUCTASE SUBUNIT N"/>
    <property type="match status" value="1"/>
</dbReference>
<dbReference type="PANTHER" id="PTHR39429:SF3">
    <property type="entry name" value="LIGHT-INDEPENDENT PROTOCHLOROPHYLLIDE REDUCTASE SUBUNIT N"/>
    <property type="match status" value="1"/>
</dbReference>
<dbReference type="Pfam" id="PF00148">
    <property type="entry name" value="Oxidored_nitro"/>
    <property type="match status" value="1"/>
</dbReference>
<dbReference type="PIRSF" id="PIRSF000162">
    <property type="entry name" value="P_chlorophyll_rd"/>
    <property type="match status" value="1"/>
</dbReference>
<dbReference type="SUPFAM" id="SSF53807">
    <property type="entry name" value="Helical backbone' metal receptor"/>
    <property type="match status" value="1"/>
</dbReference>
<proteinExistence type="inferred from homology"/>
<organism>
    <name type="scientific">Cereibacter sphaeroides (strain KD131 / KCTC 12085)</name>
    <name type="common">Rhodobacter sphaeroides</name>
    <dbReference type="NCBI Taxonomy" id="557760"/>
    <lineage>
        <taxon>Bacteria</taxon>
        <taxon>Pseudomonadati</taxon>
        <taxon>Pseudomonadota</taxon>
        <taxon>Alphaproteobacteria</taxon>
        <taxon>Rhodobacterales</taxon>
        <taxon>Paracoccaceae</taxon>
        <taxon>Cereibacter</taxon>
    </lineage>
</organism>
<protein>
    <recommendedName>
        <fullName evidence="1">Light-independent protochlorophyllide reductase subunit N</fullName>
        <shortName evidence="1">DPOR subunit N</shortName>
        <shortName evidence="1">LI-POR subunit N</shortName>
        <ecNumber evidence="1">1.3.7.7</ecNumber>
    </recommendedName>
</protein>
<comment type="function">
    <text evidence="1">Component of the dark-operative protochlorophyllide reductase (DPOR) that uses Mg-ATP and reduced ferredoxin to reduce ring D of protochlorophyllide (Pchlide) to form chlorophyllide a (Chlide). This reaction is light-independent. The NB-protein (BchN-BchB) is the catalytic component of the complex.</text>
</comment>
<comment type="catalytic activity">
    <reaction evidence="1">
        <text>chlorophyllide a + oxidized 2[4Fe-4S]-[ferredoxin] + 2 ADP + 2 phosphate = protochlorophyllide a + reduced 2[4Fe-4S]-[ferredoxin] + 2 ATP + 2 H2O</text>
        <dbReference type="Rhea" id="RHEA:28202"/>
        <dbReference type="Rhea" id="RHEA-COMP:10002"/>
        <dbReference type="Rhea" id="RHEA-COMP:10004"/>
        <dbReference type="ChEBI" id="CHEBI:15377"/>
        <dbReference type="ChEBI" id="CHEBI:30616"/>
        <dbReference type="ChEBI" id="CHEBI:33722"/>
        <dbReference type="ChEBI" id="CHEBI:33723"/>
        <dbReference type="ChEBI" id="CHEBI:43474"/>
        <dbReference type="ChEBI" id="CHEBI:83348"/>
        <dbReference type="ChEBI" id="CHEBI:83350"/>
        <dbReference type="ChEBI" id="CHEBI:456216"/>
        <dbReference type="EC" id="1.3.7.7"/>
    </reaction>
</comment>
<comment type="cofactor">
    <cofactor evidence="1">
        <name>[4Fe-4S] cluster</name>
        <dbReference type="ChEBI" id="CHEBI:49883"/>
    </cofactor>
    <text evidence="1">Binds 1 [4Fe-4S] cluster per heterodimer. The cluster is bound at the heterodimer interface by residues from both subunits.</text>
</comment>
<comment type="pathway">
    <text evidence="1">Porphyrin-containing compound metabolism; bacteriochlorophyll biosynthesis (light-independent).</text>
</comment>
<comment type="subunit">
    <text evidence="1">Protochlorophyllide reductase is composed of three subunits; BchL, BchN and BchB. Forms a heterotetramer of two BchB and two BchN subunits.</text>
</comment>
<comment type="similarity">
    <text evidence="1">Belongs to the BchN/ChlN family.</text>
</comment>
<gene>
    <name evidence="1" type="primary">bchN</name>
    <name type="ordered locus">RSKD131_1611</name>
</gene>
<reference key="1">
    <citation type="journal article" date="2009" name="J. Bacteriol.">
        <title>Complete genome sequence of Rhodobacter sphaeroides KD131.</title>
        <authorList>
            <person name="Lim S.-K."/>
            <person name="Kim S.J."/>
            <person name="Cha S.H."/>
            <person name="Oh Y.-K."/>
            <person name="Rhee H.-J."/>
            <person name="Kim M.-S."/>
            <person name="Lee J.K."/>
        </authorList>
    </citation>
    <scope>NUCLEOTIDE SEQUENCE [LARGE SCALE GENOMIC DNA]</scope>
    <source>
        <strain>KD131 / KCTC 12085</strain>
    </source>
</reference>
<feature type="chain" id="PRO_1000133418" description="Light-independent protochlorophyllide reductase subunit N">
    <location>
        <begin position="1"/>
        <end position="428"/>
    </location>
</feature>
<feature type="binding site" evidence="1">
    <location>
        <position position="29"/>
    </location>
    <ligand>
        <name>[4Fe-4S] cluster</name>
        <dbReference type="ChEBI" id="CHEBI:49883"/>
        <note>ligand shared with heterodimeric partner</note>
    </ligand>
</feature>
<feature type="binding site" evidence="1">
    <location>
        <position position="54"/>
    </location>
    <ligand>
        <name>[4Fe-4S] cluster</name>
        <dbReference type="ChEBI" id="CHEBI:49883"/>
        <note>ligand shared with heterodimeric partner</note>
    </ligand>
</feature>
<feature type="binding site" evidence="1">
    <location>
        <position position="115"/>
    </location>
    <ligand>
        <name>[4Fe-4S] cluster</name>
        <dbReference type="ChEBI" id="CHEBI:49883"/>
        <note>ligand shared with heterodimeric partner</note>
    </ligand>
</feature>
<evidence type="ECO:0000255" key="1">
    <source>
        <dbReference type="HAMAP-Rule" id="MF_00352"/>
    </source>
</evidence>
<keyword id="KW-0004">4Fe-4S</keyword>
<keyword id="KW-0067">ATP-binding</keyword>
<keyword id="KW-0077">Bacteriochlorophyll biosynthesis</keyword>
<keyword id="KW-0149">Chlorophyll biosynthesis</keyword>
<keyword id="KW-0408">Iron</keyword>
<keyword id="KW-0411">Iron-sulfur</keyword>
<keyword id="KW-0479">Metal-binding</keyword>
<keyword id="KW-0547">Nucleotide-binding</keyword>
<keyword id="KW-0560">Oxidoreductase</keyword>
<keyword id="KW-0602">Photosynthesis</keyword>
<name>BCHN_CERSK</name>
<sequence>MSLDLPPPPARGCRSTEVLKERGQREVFCGLTGIIWLHRKMQDAFFLVVGSRTCAHLLQSAAGVMIFAEPRFGTAVLEEKDLAGLADANAELDREVDRLLARRPDIRQLFLVGSCPSEVIKLDLHRAAERLSAHHGPAVRVYNFSGSGIETTFTQGEDACLASIVPTLPATEARELLLVGALPDVVEDQAVSLLTQLGIGPVRCLPAHHAAEAPGVGPNTVFALVQPFLGDTHGALTRRGARHIAAPFPFGEEGTTLWLKAIADEFGVSAETFEAVTAAPRARARKAVAAASEGLRGKSVFFLPDSQLEPSLARFLTRECGMSAVEVGTPFLHRGILGPDLDLLAEGPVLSEGQDVERQLDRVRAARPDLTVCGLGLANPLEAEGFTTKWAIELVFTPVHFYEQAGDLAGLFSRPVRRRAILRREAAE</sequence>